<sequence>MLGIITFIIIFGILVIVHEFGHFYFAKKSGILVREFAIGMGPKIFSHVDQGGTLYTLRMLPLGGYVRMAGWGDDKTEIKTGTPASLTLNEQGFVKRINLSQSKLDPTSLPMHVTGYDLEDQLSITGLVLEETKTYKVAHDATIVEEDGTEIRIAPLDVQYQNASIGGRLITNFAGPMNNFILGIVVFILLVFLQGGMPDFSSNHVRVQENGAAAKAGLRDNDQIVAINGYKVTSWNDLTEAVDLATRDLGPSQTIKVTYKSHQRLKTVAVKPQKHAKTYTIGVKASLKTGFKDKLLGGLELAWSRAFTILNALKGLITGFSLNKLGGPVAMYDMSNQAAQNGLESVLSLMAMLSINLGIFNLIPIPALDGGKILMNIIEAIRRKPIKQETEAYITLAGVAIMVVLMIAVTWNDIMRVFF</sequence>
<keyword id="KW-1003">Cell membrane</keyword>
<keyword id="KW-0378">Hydrolase</keyword>
<keyword id="KW-0472">Membrane</keyword>
<keyword id="KW-0479">Metal-binding</keyword>
<keyword id="KW-0482">Metalloprotease</keyword>
<keyword id="KW-0645">Protease</keyword>
<keyword id="KW-1185">Reference proteome</keyword>
<keyword id="KW-0812">Transmembrane</keyword>
<keyword id="KW-1133">Transmembrane helix</keyword>
<keyword id="KW-0862">Zinc</keyword>
<name>Y1963_STRP1</name>
<protein>
    <recommendedName>
        <fullName>Putative zinc metalloprotease SPy_1963/M5005_Spy1674</fullName>
        <ecNumber>3.4.24.-</ecNumber>
    </recommendedName>
</protein>
<dbReference type="EC" id="3.4.24.-"/>
<dbReference type="EMBL" id="AE004092">
    <property type="protein sequence ID" value="AAK34656.1"/>
    <property type="molecule type" value="Genomic_DNA"/>
</dbReference>
<dbReference type="EMBL" id="CP000017">
    <property type="protein sequence ID" value="AAZ52292.1"/>
    <property type="molecule type" value="Genomic_DNA"/>
</dbReference>
<dbReference type="RefSeq" id="NP_269935.1">
    <property type="nucleotide sequence ID" value="NC_002737.2"/>
</dbReference>
<dbReference type="SMR" id="Q99XY3"/>
<dbReference type="PaxDb" id="1314-HKU360_01791"/>
<dbReference type="KEGG" id="spy:SPy_1963"/>
<dbReference type="KEGG" id="spz:M5005_Spy1674"/>
<dbReference type="PATRIC" id="fig|160490.10.peg.1710"/>
<dbReference type="HOGENOM" id="CLU_025778_1_0_9"/>
<dbReference type="OMA" id="EYGHFWA"/>
<dbReference type="Proteomes" id="UP000000750">
    <property type="component" value="Chromosome"/>
</dbReference>
<dbReference type="GO" id="GO:0005886">
    <property type="term" value="C:plasma membrane"/>
    <property type="evidence" value="ECO:0007669"/>
    <property type="project" value="UniProtKB-SubCell"/>
</dbReference>
<dbReference type="GO" id="GO:0046872">
    <property type="term" value="F:metal ion binding"/>
    <property type="evidence" value="ECO:0007669"/>
    <property type="project" value="UniProtKB-KW"/>
</dbReference>
<dbReference type="GO" id="GO:0004222">
    <property type="term" value="F:metalloendopeptidase activity"/>
    <property type="evidence" value="ECO:0007669"/>
    <property type="project" value="InterPro"/>
</dbReference>
<dbReference type="GO" id="GO:0006508">
    <property type="term" value="P:proteolysis"/>
    <property type="evidence" value="ECO:0007669"/>
    <property type="project" value="UniProtKB-KW"/>
</dbReference>
<dbReference type="CDD" id="cd06163">
    <property type="entry name" value="S2P-M50_PDZ_RseP-like"/>
    <property type="match status" value="1"/>
</dbReference>
<dbReference type="Gene3D" id="2.30.42.10">
    <property type="match status" value="1"/>
</dbReference>
<dbReference type="InterPro" id="IPR001478">
    <property type="entry name" value="PDZ"/>
</dbReference>
<dbReference type="InterPro" id="IPR036034">
    <property type="entry name" value="PDZ_sf"/>
</dbReference>
<dbReference type="InterPro" id="IPR004387">
    <property type="entry name" value="Pept_M50_Zn"/>
</dbReference>
<dbReference type="InterPro" id="IPR008915">
    <property type="entry name" value="Peptidase_M50"/>
</dbReference>
<dbReference type="NCBIfam" id="TIGR00054">
    <property type="entry name" value="RIP metalloprotease RseP"/>
    <property type="match status" value="1"/>
</dbReference>
<dbReference type="PANTHER" id="PTHR42837:SF2">
    <property type="entry name" value="MEMBRANE METALLOPROTEASE ARASP2, CHLOROPLASTIC-RELATED"/>
    <property type="match status" value="1"/>
</dbReference>
<dbReference type="PANTHER" id="PTHR42837">
    <property type="entry name" value="REGULATOR OF SIGMA-E PROTEASE RSEP"/>
    <property type="match status" value="1"/>
</dbReference>
<dbReference type="Pfam" id="PF13180">
    <property type="entry name" value="PDZ_2"/>
    <property type="match status" value="1"/>
</dbReference>
<dbReference type="Pfam" id="PF02163">
    <property type="entry name" value="Peptidase_M50"/>
    <property type="match status" value="1"/>
</dbReference>
<dbReference type="SUPFAM" id="SSF50156">
    <property type="entry name" value="PDZ domain-like"/>
    <property type="match status" value="1"/>
</dbReference>
<dbReference type="PROSITE" id="PS00142">
    <property type="entry name" value="ZINC_PROTEASE"/>
    <property type="match status" value="1"/>
</dbReference>
<proteinExistence type="inferred from homology"/>
<accession>Q99XY3</accession>
<accession>Q48WI3</accession>
<organism>
    <name type="scientific">Streptococcus pyogenes serotype M1</name>
    <dbReference type="NCBI Taxonomy" id="301447"/>
    <lineage>
        <taxon>Bacteria</taxon>
        <taxon>Bacillati</taxon>
        <taxon>Bacillota</taxon>
        <taxon>Bacilli</taxon>
        <taxon>Lactobacillales</taxon>
        <taxon>Streptococcaceae</taxon>
        <taxon>Streptococcus</taxon>
    </lineage>
</organism>
<evidence type="ECO:0000255" key="1"/>
<evidence type="ECO:0000255" key="2">
    <source>
        <dbReference type="PROSITE-ProRule" id="PRU10095"/>
    </source>
</evidence>
<evidence type="ECO:0000305" key="3"/>
<comment type="cofactor">
    <cofactor evidence="3">
        <name>Zn(2+)</name>
        <dbReference type="ChEBI" id="CHEBI:29105"/>
    </cofactor>
</comment>
<comment type="subcellular location">
    <subcellularLocation>
        <location evidence="3">Cell membrane</location>
        <topology evidence="3">Multi-pass membrane protein</topology>
    </subcellularLocation>
</comment>
<comment type="similarity">
    <text evidence="3">Belongs to the peptidase M50B family.</text>
</comment>
<gene>
    <name type="ordered locus">SPy_1963</name>
    <name type="ordered locus">M5005_Spy1674</name>
</gene>
<reference key="1">
    <citation type="journal article" date="2001" name="Proc. Natl. Acad. Sci. U.S.A.">
        <title>Complete genome sequence of an M1 strain of Streptococcus pyogenes.</title>
        <authorList>
            <person name="Ferretti J.J."/>
            <person name="McShan W.M."/>
            <person name="Ajdic D.J."/>
            <person name="Savic D.J."/>
            <person name="Savic G."/>
            <person name="Lyon K."/>
            <person name="Primeaux C."/>
            <person name="Sezate S."/>
            <person name="Suvorov A.N."/>
            <person name="Kenton S."/>
            <person name="Lai H.S."/>
            <person name="Lin S.P."/>
            <person name="Qian Y."/>
            <person name="Jia H.G."/>
            <person name="Najar F.Z."/>
            <person name="Ren Q."/>
            <person name="Zhu H."/>
            <person name="Song L."/>
            <person name="White J."/>
            <person name="Yuan X."/>
            <person name="Clifton S.W."/>
            <person name="Roe B.A."/>
            <person name="McLaughlin R.E."/>
        </authorList>
    </citation>
    <scope>NUCLEOTIDE SEQUENCE [LARGE SCALE GENOMIC DNA]</scope>
    <source>
        <strain>ATCC 700294 / SF370 / Serotype M1</strain>
    </source>
</reference>
<reference key="2">
    <citation type="journal article" date="2005" name="J. Infect. Dis.">
        <title>Evolutionary origin and emergence of a highly successful clone of serotype M1 group A Streptococcus involved multiple horizontal gene transfer events.</title>
        <authorList>
            <person name="Sumby P."/>
            <person name="Porcella S.F."/>
            <person name="Madrigal A.G."/>
            <person name="Barbian K.D."/>
            <person name="Virtaneva K."/>
            <person name="Ricklefs S.M."/>
            <person name="Sturdevant D.E."/>
            <person name="Graham M.R."/>
            <person name="Vuopio-Varkila J."/>
            <person name="Hoe N.P."/>
            <person name="Musser J.M."/>
        </authorList>
    </citation>
    <scope>NUCLEOTIDE SEQUENCE [LARGE SCALE GENOMIC DNA]</scope>
    <source>
        <strain>ATCC BAA-947 / MGAS5005 / Serotype M1</strain>
    </source>
</reference>
<feature type="chain" id="PRO_0000088468" description="Putative zinc metalloprotease SPy_1963/M5005_Spy1674">
    <location>
        <begin position="1"/>
        <end position="419"/>
    </location>
</feature>
<feature type="transmembrane region" description="Helical" evidence="1">
    <location>
        <begin position="169"/>
        <end position="191"/>
    </location>
</feature>
<feature type="transmembrane region" description="Helical" evidence="1">
    <location>
        <begin position="301"/>
        <end position="323"/>
    </location>
</feature>
<feature type="transmembrane region" description="Helical" evidence="1">
    <location>
        <begin position="343"/>
        <end position="365"/>
    </location>
</feature>
<feature type="transmembrane region" description="Helical" evidence="1">
    <location>
        <begin position="392"/>
        <end position="411"/>
    </location>
</feature>
<feature type="domain" description="PDZ">
    <location>
        <begin position="175"/>
        <end position="274"/>
    </location>
</feature>
<feature type="active site" evidence="2">
    <location>
        <position position="19"/>
    </location>
</feature>
<feature type="binding site" evidence="2">
    <location>
        <position position="18"/>
    </location>
    <ligand>
        <name>Zn(2+)</name>
        <dbReference type="ChEBI" id="CHEBI:29105"/>
        <note>catalytic</note>
    </ligand>
</feature>
<feature type="binding site" evidence="2">
    <location>
        <position position="22"/>
    </location>
    <ligand>
        <name>Zn(2+)</name>
        <dbReference type="ChEBI" id="CHEBI:29105"/>
        <note>catalytic</note>
    </ligand>
</feature>
<feature type="sequence conflict" description="In Ref. 2; AAZ52292." evidence="3" ref="2">
    <original>A</original>
    <variation>T</variation>
    <location>
        <position position="84"/>
    </location>
</feature>